<organism>
    <name type="scientific">Rhodopseudomonas palustris (strain BisA53)</name>
    <dbReference type="NCBI Taxonomy" id="316055"/>
    <lineage>
        <taxon>Bacteria</taxon>
        <taxon>Pseudomonadati</taxon>
        <taxon>Pseudomonadota</taxon>
        <taxon>Alphaproteobacteria</taxon>
        <taxon>Hyphomicrobiales</taxon>
        <taxon>Nitrobacteraceae</taxon>
        <taxon>Rhodopseudomonas</taxon>
    </lineage>
</organism>
<evidence type="ECO:0000255" key="1">
    <source>
        <dbReference type="HAMAP-Rule" id="MF_01382"/>
    </source>
</evidence>
<evidence type="ECO:0000256" key="2">
    <source>
        <dbReference type="SAM" id="MobiDB-lite"/>
    </source>
</evidence>
<comment type="function">
    <text evidence="1">Part of the Sec protein translocase complex. Interacts with the SecYEG preprotein conducting channel. Has a central role in coupling the hydrolysis of ATP to the transfer of proteins into and across the cell membrane, serving both as a receptor for the preprotein-SecB complex and as an ATP-driven molecular motor driving the stepwise translocation of polypeptide chains across the membrane.</text>
</comment>
<comment type="catalytic activity">
    <reaction evidence="1">
        <text>ATP + H2O + cellular proteinSide 1 = ADP + phosphate + cellular proteinSide 2.</text>
        <dbReference type="EC" id="7.4.2.8"/>
    </reaction>
</comment>
<comment type="cofactor">
    <cofactor evidence="1">
        <name>Zn(2+)</name>
        <dbReference type="ChEBI" id="CHEBI:29105"/>
    </cofactor>
    <text evidence="1">May bind 1 zinc ion per subunit.</text>
</comment>
<comment type="subunit">
    <text evidence="1">Monomer and homodimer. Part of the essential Sec protein translocation apparatus which comprises SecA, SecYEG and auxiliary proteins SecDF-YajC and YidC.</text>
</comment>
<comment type="subcellular location">
    <subcellularLocation>
        <location evidence="1">Cell inner membrane</location>
        <topology evidence="1">Peripheral membrane protein</topology>
        <orientation evidence="1">Cytoplasmic side</orientation>
    </subcellularLocation>
    <subcellularLocation>
        <location evidence="1">Cytoplasm</location>
    </subcellularLocation>
    <text evidence="1">Distribution is 50-50.</text>
</comment>
<comment type="similarity">
    <text evidence="1">Belongs to the SecA family.</text>
</comment>
<feature type="chain" id="PRO_0000320969" description="Protein translocase subunit SecA 1">
    <location>
        <begin position="1"/>
        <end position="947"/>
    </location>
</feature>
<feature type="region of interest" description="Disordered" evidence="2">
    <location>
        <begin position="907"/>
        <end position="937"/>
    </location>
</feature>
<feature type="compositionally biased region" description="Basic and acidic residues" evidence="2">
    <location>
        <begin position="908"/>
        <end position="918"/>
    </location>
</feature>
<feature type="binding site" evidence="1">
    <location>
        <position position="87"/>
    </location>
    <ligand>
        <name>ATP</name>
        <dbReference type="ChEBI" id="CHEBI:30616"/>
    </ligand>
</feature>
<feature type="binding site" evidence="1">
    <location>
        <begin position="105"/>
        <end position="109"/>
    </location>
    <ligand>
        <name>ATP</name>
        <dbReference type="ChEBI" id="CHEBI:30616"/>
    </ligand>
</feature>
<feature type="binding site" evidence="1">
    <location>
        <position position="525"/>
    </location>
    <ligand>
        <name>ATP</name>
        <dbReference type="ChEBI" id="CHEBI:30616"/>
    </ligand>
</feature>
<feature type="binding site" evidence="1">
    <location>
        <position position="931"/>
    </location>
    <ligand>
        <name>Zn(2+)</name>
        <dbReference type="ChEBI" id="CHEBI:29105"/>
    </ligand>
</feature>
<feature type="binding site" evidence="1">
    <location>
        <position position="933"/>
    </location>
    <ligand>
        <name>Zn(2+)</name>
        <dbReference type="ChEBI" id="CHEBI:29105"/>
    </ligand>
</feature>
<feature type="binding site" evidence="1">
    <location>
        <position position="942"/>
    </location>
    <ligand>
        <name>Zn(2+)</name>
        <dbReference type="ChEBI" id="CHEBI:29105"/>
    </ligand>
</feature>
<feature type="binding site" evidence="1">
    <location>
        <position position="943"/>
    </location>
    <ligand>
        <name>Zn(2+)</name>
        <dbReference type="ChEBI" id="CHEBI:29105"/>
    </ligand>
</feature>
<name>SECA1_RHOP5</name>
<proteinExistence type="inferred from homology"/>
<sequence>MIGALARRLFGSPNDRRIKGYQPRVAAINALEPEVAALSDEALRARTVDFRAQIAAGATLDDILVPAFATVREAAKRTLGQRHFDVQLIGGMVLHEGDIAEMKTGEGKTLVATLAVYLNALAGKGVHVVTVNDYLAKRDSAWMGEIYTFLGMTTGVIVHGLSDAERKAAYGCDITYGTNNEYGFDYLRDNMKYTLEEMVQRGHAYAIVDEVDSILIDEARTPLIISGPLDDRSEFYNTIDTFLPKLDKATDFEVDEKQRTVTLTEVGMETIEVLLRDAGQLKGESLYDIENVSVVHHINQALRAHSLFQRDKDYIVRNDEVIIIDEFTGRMMPGRRYSEGLHQALEAKEHVTVQPENQTLASITFQNYFRMYDKLAGMTGTALTEADELFDIYKLEVVEIPTNVPIARLDEDDEVYRTQNEKYAAILAEVERANSRLQPVLVGTASIEKSEVLADYLKNNGYKQIDFADPKGMEKLYAAARAGKPAKLFAVLNARFHEQEAYIVAEAGVPGAITIATNMAGRGTDIKLGGSLEMRIEHETVDITDEAEKAAKIELIKADVERFRELVLRAEETIEIEPAKGAKPAKTLTRPGGLYIIGSERHESRRIDNQLRGRSGRQGDPGRSKFFLSLEDDLMRIFGSDRLDTMLTKLGLKEGEAIIHPWINKALEKAQQKVEARNFDIRKNLLKFDNVSNDQRKVIFDQRIDLMQDESVAETVSDMRHIFVEDLVAKHVPEHAYAEQWDVAGLKEELNRVLGLDLPVEEWAKEEGIAEEELLSRIENRADEHMAAKVAQWGPEMMRYAEKSILLQTLDHLWREHLVMLDHLRNVIGLRGYGQRDPLQEYKSEAFNLFEALIAHLREAVTAQLMRVEIVTQEPQPELPPMAAHKFDPQTGEDELAFASVALAPADDADKAARDPNRPETWGKVGRNEDCPCNSGKKYKHCHGRYA</sequence>
<accession>Q07VC7</accession>
<keyword id="KW-0067">ATP-binding</keyword>
<keyword id="KW-0997">Cell inner membrane</keyword>
<keyword id="KW-1003">Cell membrane</keyword>
<keyword id="KW-0963">Cytoplasm</keyword>
<keyword id="KW-0472">Membrane</keyword>
<keyword id="KW-0479">Metal-binding</keyword>
<keyword id="KW-0547">Nucleotide-binding</keyword>
<keyword id="KW-0653">Protein transport</keyword>
<keyword id="KW-1278">Translocase</keyword>
<keyword id="KW-0811">Translocation</keyword>
<keyword id="KW-0813">Transport</keyword>
<keyword id="KW-0862">Zinc</keyword>
<protein>
    <recommendedName>
        <fullName evidence="1">Protein translocase subunit SecA 1</fullName>
        <ecNumber evidence="1">7.4.2.8</ecNumber>
    </recommendedName>
</protein>
<reference key="1">
    <citation type="submission" date="2006-09" db="EMBL/GenBank/DDBJ databases">
        <title>Complete sequence of Rhodopseudomonas palustris BisA53.</title>
        <authorList>
            <consortium name="US DOE Joint Genome Institute"/>
            <person name="Copeland A."/>
            <person name="Lucas S."/>
            <person name="Lapidus A."/>
            <person name="Barry K."/>
            <person name="Detter J.C."/>
            <person name="Glavina del Rio T."/>
            <person name="Hammon N."/>
            <person name="Israni S."/>
            <person name="Dalin E."/>
            <person name="Tice H."/>
            <person name="Pitluck S."/>
            <person name="Chain P."/>
            <person name="Malfatti S."/>
            <person name="Shin M."/>
            <person name="Vergez L."/>
            <person name="Schmutz J."/>
            <person name="Larimer F."/>
            <person name="Land M."/>
            <person name="Hauser L."/>
            <person name="Pelletier D.A."/>
            <person name="Kyrpides N."/>
            <person name="Kim E."/>
            <person name="Harwood C.S."/>
            <person name="Oda Y."/>
            <person name="Richardson P."/>
        </authorList>
    </citation>
    <scope>NUCLEOTIDE SEQUENCE [LARGE SCALE GENOMIC DNA]</scope>
    <source>
        <strain>BisA53</strain>
    </source>
</reference>
<dbReference type="EC" id="7.4.2.8" evidence="1"/>
<dbReference type="EMBL" id="CP000463">
    <property type="protein sequence ID" value="ABJ04107.1"/>
    <property type="molecule type" value="Genomic_DNA"/>
</dbReference>
<dbReference type="SMR" id="Q07VC7"/>
<dbReference type="STRING" id="316055.RPE_0146"/>
<dbReference type="KEGG" id="rpe:RPE_0146"/>
<dbReference type="eggNOG" id="COG0653">
    <property type="taxonomic scope" value="Bacteria"/>
</dbReference>
<dbReference type="HOGENOM" id="CLU_005314_3_0_5"/>
<dbReference type="OrthoDB" id="9805579at2"/>
<dbReference type="GO" id="GO:0031522">
    <property type="term" value="C:cell envelope Sec protein transport complex"/>
    <property type="evidence" value="ECO:0007669"/>
    <property type="project" value="TreeGrafter"/>
</dbReference>
<dbReference type="GO" id="GO:0005829">
    <property type="term" value="C:cytosol"/>
    <property type="evidence" value="ECO:0007669"/>
    <property type="project" value="TreeGrafter"/>
</dbReference>
<dbReference type="GO" id="GO:0005886">
    <property type="term" value="C:plasma membrane"/>
    <property type="evidence" value="ECO:0007669"/>
    <property type="project" value="UniProtKB-SubCell"/>
</dbReference>
<dbReference type="GO" id="GO:0005524">
    <property type="term" value="F:ATP binding"/>
    <property type="evidence" value="ECO:0007669"/>
    <property type="project" value="UniProtKB-UniRule"/>
</dbReference>
<dbReference type="GO" id="GO:0046872">
    <property type="term" value="F:metal ion binding"/>
    <property type="evidence" value="ECO:0007669"/>
    <property type="project" value="UniProtKB-KW"/>
</dbReference>
<dbReference type="GO" id="GO:0008564">
    <property type="term" value="F:protein-exporting ATPase activity"/>
    <property type="evidence" value="ECO:0007669"/>
    <property type="project" value="UniProtKB-EC"/>
</dbReference>
<dbReference type="GO" id="GO:0065002">
    <property type="term" value="P:intracellular protein transmembrane transport"/>
    <property type="evidence" value="ECO:0007669"/>
    <property type="project" value="UniProtKB-UniRule"/>
</dbReference>
<dbReference type="GO" id="GO:0017038">
    <property type="term" value="P:protein import"/>
    <property type="evidence" value="ECO:0007669"/>
    <property type="project" value="InterPro"/>
</dbReference>
<dbReference type="GO" id="GO:0006605">
    <property type="term" value="P:protein targeting"/>
    <property type="evidence" value="ECO:0007669"/>
    <property type="project" value="UniProtKB-UniRule"/>
</dbReference>
<dbReference type="GO" id="GO:0043952">
    <property type="term" value="P:protein transport by the Sec complex"/>
    <property type="evidence" value="ECO:0007669"/>
    <property type="project" value="TreeGrafter"/>
</dbReference>
<dbReference type="CDD" id="cd17928">
    <property type="entry name" value="DEXDc_SecA"/>
    <property type="match status" value="1"/>
</dbReference>
<dbReference type="CDD" id="cd18803">
    <property type="entry name" value="SF2_C_secA"/>
    <property type="match status" value="1"/>
</dbReference>
<dbReference type="FunFam" id="3.90.1440.10:FF:000001">
    <property type="entry name" value="Preprotein translocase subunit SecA"/>
    <property type="match status" value="1"/>
</dbReference>
<dbReference type="FunFam" id="1.10.3060.10:FF:000003">
    <property type="entry name" value="Protein translocase subunit SecA"/>
    <property type="match status" value="1"/>
</dbReference>
<dbReference type="FunFam" id="3.40.50.300:FF:000334">
    <property type="entry name" value="Protein translocase subunit SecA"/>
    <property type="match status" value="1"/>
</dbReference>
<dbReference type="FunFam" id="3.40.50.300:FF:001790">
    <property type="entry name" value="Protein translocase subunit SecA"/>
    <property type="match status" value="1"/>
</dbReference>
<dbReference type="Gene3D" id="1.10.3060.10">
    <property type="entry name" value="Helical scaffold and wing domains of SecA"/>
    <property type="match status" value="1"/>
</dbReference>
<dbReference type="Gene3D" id="3.40.50.300">
    <property type="entry name" value="P-loop containing nucleotide triphosphate hydrolases"/>
    <property type="match status" value="2"/>
</dbReference>
<dbReference type="Gene3D" id="3.90.1440.10">
    <property type="entry name" value="SecA, preprotein cross-linking domain"/>
    <property type="match status" value="1"/>
</dbReference>
<dbReference type="HAMAP" id="MF_01382">
    <property type="entry name" value="SecA"/>
    <property type="match status" value="1"/>
</dbReference>
<dbReference type="InterPro" id="IPR014001">
    <property type="entry name" value="Helicase_ATP-bd"/>
</dbReference>
<dbReference type="InterPro" id="IPR027417">
    <property type="entry name" value="P-loop_NTPase"/>
</dbReference>
<dbReference type="InterPro" id="IPR004027">
    <property type="entry name" value="SEC_C_motif"/>
</dbReference>
<dbReference type="InterPro" id="IPR000185">
    <property type="entry name" value="SecA"/>
</dbReference>
<dbReference type="InterPro" id="IPR020937">
    <property type="entry name" value="SecA_CS"/>
</dbReference>
<dbReference type="InterPro" id="IPR011115">
    <property type="entry name" value="SecA_DEAD"/>
</dbReference>
<dbReference type="InterPro" id="IPR014018">
    <property type="entry name" value="SecA_motor_DEAD"/>
</dbReference>
<dbReference type="InterPro" id="IPR011130">
    <property type="entry name" value="SecA_preprotein_X-link_dom"/>
</dbReference>
<dbReference type="InterPro" id="IPR044722">
    <property type="entry name" value="SecA_SF2_C"/>
</dbReference>
<dbReference type="InterPro" id="IPR011116">
    <property type="entry name" value="SecA_Wing/Scaffold"/>
</dbReference>
<dbReference type="InterPro" id="IPR036266">
    <property type="entry name" value="SecA_Wing/Scaffold_sf"/>
</dbReference>
<dbReference type="InterPro" id="IPR036670">
    <property type="entry name" value="SecA_X-link_sf"/>
</dbReference>
<dbReference type="NCBIfam" id="NF009538">
    <property type="entry name" value="PRK12904.1"/>
    <property type="match status" value="1"/>
</dbReference>
<dbReference type="NCBIfam" id="TIGR00963">
    <property type="entry name" value="secA"/>
    <property type="match status" value="1"/>
</dbReference>
<dbReference type="PANTHER" id="PTHR30612:SF0">
    <property type="entry name" value="CHLOROPLAST PROTEIN-TRANSPORTING ATPASE"/>
    <property type="match status" value="1"/>
</dbReference>
<dbReference type="PANTHER" id="PTHR30612">
    <property type="entry name" value="SECA INNER MEMBRANE COMPONENT OF SEC PROTEIN SECRETION SYSTEM"/>
    <property type="match status" value="1"/>
</dbReference>
<dbReference type="Pfam" id="PF21090">
    <property type="entry name" value="P-loop_SecA"/>
    <property type="match status" value="1"/>
</dbReference>
<dbReference type="Pfam" id="PF02810">
    <property type="entry name" value="SEC-C"/>
    <property type="match status" value="1"/>
</dbReference>
<dbReference type="Pfam" id="PF07517">
    <property type="entry name" value="SecA_DEAD"/>
    <property type="match status" value="1"/>
</dbReference>
<dbReference type="Pfam" id="PF01043">
    <property type="entry name" value="SecA_PP_bind"/>
    <property type="match status" value="1"/>
</dbReference>
<dbReference type="Pfam" id="PF07516">
    <property type="entry name" value="SecA_SW"/>
    <property type="match status" value="1"/>
</dbReference>
<dbReference type="PRINTS" id="PR00906">
    <property type="entry name" value="SECA"/>
</dbReference>
<dbReference type="SMART" id="SM00957">
    <property type="entry name" value="SecA_DEAD"/>
    <property type="match status" value="1"/>
</dbReference>
<dbReference type="SMART" id="SM00958">
    <property type="entry name" value="SecA_PP_bind"/>
    <property type="match status" value="1"/>
</dbReference>
<dbReference type="SUPFAM" id="SSF81886">
    <property type="entry name" value="Helical scaffold and wing domains of SecA"/>
    <property type="match status" value="1"/>
</dbReference>
<dbReference type="SUPFAM" id="SSF52540">
    <property type="entry name" value="P-loop containing nucleoside triphosphate hydrolases"/>
    <property type="match status" value="2"/>
</dbReference>
<dbReference type="SUPFAM" id="SSF81767">
    <property type="entry name" value="Pre-protein crosslinking domain of SecA"/>
    <property type="match status" value="1"/>
</dbReference>
<dbReference type="PROSITE" id="PS01312">
    <property type="entry name" value="SECA"/>
    <property type="match status" value="1"/>
</dbReference>
<dbReference type="PROSITE" id="PS51196">
    <property type="entry name" value="SECA_MOTOR_DEAD"/>
    <property type="match status" value="1"/>
</dbReference>
<gene>
    <name evidence="1" type="primary">secA1</name>
    <name type="ordered locus">RPE_0146</name>
</gene>